<accession>Q2KI58</accession>
<organism>
    <name type="scientific">Bos taurus</name>
    <name type="common">Bovine</name>
    <dbReference type="NCBI Taxonomy" id="9913"/>
    <lineage>
        <taxon>Eukaryota</taxon>
        <taxon>Metazoa</taxon>
        <taxon>Chordata</taxon>
        <taxon>Craniata</taxon>
        <taxon>Vertebrata</taxon>
        <taxon>Euteleostomi</taxon>
        <taxon>Mammalia</taxon>
        <taxon>Eutheria</taxon>
        <taxon>Laurasiatheria</taxon>
        <taxon>Artiodactyla</taxon>
        <taxon>Ruminantia</taxon>
        <taxon>Pecora</taxon>
        <taxon>Bovidae</taxon>
        <taxon>Bovinae</taxon>
        <taxon>Bos</taxon>
    </lineage>
</organism>
<gene>
    <name type="primary">ZNF181</name>
</gene>
<keyword id="KW-0238">DNA-binding</keyword>
<keyword id="KW-1017">Isopeptide bond</keyword>
<keyword id="KW-0479">Metal-binding</keyword>
<keyword id="KW-0539">Nucleus</keyword>
<keyword id="KW-1185">Reference proteome</keyword>
<keyword id="KW-0677">Repeat</keyword>
<keyword id="KW-0804">Transcription</keyword>
<keyword id="KW-0805">Transcription regulation</keyword>
<keyword id="KW-0832">Ubl conjugation</keyword>
<keyword id="KW-0862">Zinc</keyword>
<keyword id="KW-0863">Zinc-finger</keyword>
<reference key="1">
    <citation type="submission" date="2006-01" db="EMBL/GenBank/DDBJ databases">
        <authorList>
            <consortium name="NIH - Mammalian Gene Collection (MGC) project"/>
        </authorList>
    </citation>
    <scope>NUCLEOTIDE SEQUENCE [LARGE SCALE MRNA]</scope>
    <source>
        <strain>Hereford</strain>
        <tissue>Rumen</tissue>
    </source>
</reference>
<evidence type="ECO:0000250" key="1">
    <source>
        <dbReference type="UniProtKB" id="Q2M3W8"/>
    </source>
</evidence>
<evidence type="ECO:0000255" key="2">
    <source>
        <dbReference type="PROSITE-ProRule" id="PRU00042"/>
    </source>
</evidence>
<evidence type="ECO:0000255" key="3">
    <source>
        <dbReference type="PROSITE-ProRule" id="PRU00119"/>
    </source>
</evidence>
<evidence type="ECO:0000305" key="4"/>
<feature type="chain" id="PRO_0000230665" description="Zinc finger protein 181">
    <location>
        <begin position="1"/>
        <end position="570"/>
    </location>
</feature>
<feature type="domain" description="KRAB" evidence="3">
    <location>
        <begin position="4"/>
        <end position="75"/>
    </location>
</feature>
<feature type="zinc finger region" description="C2H2-type 1" evidence="2">
    <location>
        <begin position="236"/>
        <end position="258"/>
    </location>
</feature>
<feature type="zinc finger region" description="C2H2-type 2" evidence="2">
    <location>
        <begin position="264"/>
        <end position="286"/>
    </location>
</feature>
<feature type="zinc finger region" description="C2H2-type 3" evidence="2">
    <location>
        <begin position="292"/>
        <end position="314"/>
    </location>
</feature>
<feature type="zinc finger region" description="C2H2-type 4" evidence="2">
    <location>
        <begin position="320"/>
        <end position="342"/>
    </location>
</feature>
<feature type="zinc finger region" description="C2H2-type 5" evidence="2">
    <location>
        <begin position="348"/>
        <end position="370"/>
    </location>
</feature>
<feature type="zinc finger region" description="C2H2-type 6" evidence="2">
    <location>
        <begin position="376"/>
        <end position="398"/>
    </location>
</feature>
<feature type="zinc finger region" description="C2H2-type 7" evidence="2">
    <location>
        <begin position="404"/>
        <end position="426"/>
    </location>
</feature>
<feature type="zinc finger region" description="C2H2-type 8" evidence="2">
    <location>
        <begin position="432"/>
        <end position="454"/>
    </location>
</feature>
<feature type="zinc finger region" description="C2H2-type 9" evidence="2">
    <location>
        <begin position="460"/>
        <end position="482"/>
    </location>
</feature>
<feature type="zinc finger region" description="C2H2-type 10" evidence="2">
    <location>
        <begin position="488"/>
        <end position="510"/>
    </location>
</feature>
<feature type="zinc finger region" description="C2H2-type 11" evidence="2">
    <location>
        <begin position="516"/>
        <end position="538"/>
    </location>
</feature>
<feature type="cross-link" description="Glycyl lysine isopeptide (Lys-Gly) (interchain with G-Cter in SUMO2)" evidence="1">
    <location>
        <position position="125"/>
    </location>
</feature>
<comment type="function">
    <text>May be involved in transcriptional regulation.</text>
</comment>
<comment type="subcellular location">
    <subcellularLocation>
        <location evidence="4">Nucleus</location>
    </subcellularLocation>
</comment>
<comment type="similarity">
    <text evidence="4">Belongs to the krueppel C2H2-type zinc-finger protein family.</text>
</comment>
<protein>
    <recommendedName>
        <fullName>Zinc finger protein 181</fullName>
    </recommendedName>
</protein>
<sequence length="570" mass="65934">MFQVTFSDVAIDFSHEEWRWLNSTQRNLYKDVMVQNYENLVSLGLSIPKPYVIALLEDGKEPCMVEEKLSKDTFPDCKTRWENKELSMKEDIYDEDLPQMVLKEKTIQQNHEFSNFNKDLYYIKKFKGKYENQVEHFRPVTLTFRESPIGESVYKCNAFKSIFHLKSVFSEPQRISAEGKSHKCDILKKSLPTNSVIKNENINDGKKLLNSNESVAAFSQSKSLTLHQTLNKEKIYTCNECGKAFGKQSILNRHWRIHTGEKPYECHECGKTFSHGSSLTRHQISHSGEKPYKCIECGKAFSHVSSLTNHQSTHTGEKPYECMNCGKAFSRVSHLIEHLRIHTQEKLYECRICGKAFIHRSSLIHHQKIHTGEKPYECRECGKAFCCSSHLTRHQRIHAIEKQFECNKCLKVFSSLSFLIQHQSIHTEEKPFECQKCGKSFNQPESLNMHLRNHTRLKPYECSICGKAFSHRSSLFQHHRIHTGEKPYECIKCGKTFSCSSNLTVHQRIHTGEKPYKCNECGKAFSKGSNLTAHQRVHNGEKPSSTISVEKSLGHMSHCVYERSHNRETA</sequence>
<proteinExistence type="evidence at transcript level"/>
<dbReference type="EMBL" id="BC112761">
    <property type="protein sequence ID" value="AAI12762.1"/>
    <property type="molecule type" value="mRNA"/>
</dbReference>
<dbReference type="RefSeq" id="NP_001070017.1">
    <property type="nucleotide sequence ID" value="NM_001076549.1"/>
</dbReference>
<dbReference type="SMR" id="Q2KI58"/>
<dbReference type="FunCoup" id="Q2KI58">
    <property type="interactions" value="4"/>
</dbReference>
<dbReference type="STRING" id="9913.ENSBTAP00000013039"/>
<dbReference type="PaxDb" id="9913-ENSBTAP00000054562"/>
<dbReference type="GeneID" id="767826"/>
<dbReference type="KEGG" id="bta:767826"/>
<dbReference type="CTD" id="339318"/>
<dbReference type="VEuPathDB" id="HostDB:ENSBTAG00000009889"/>
<dbReference type="eggNOG" id="KOG1721">
    <property type="taxonomic scope" value="Eukaryota"/>
</dbReference>
<dbReference type="HOGENOM" id="CLU_002678_44_0_1"/>
<dbReference type="InParanoid" id="Q2KI58"/>
<dbReference type="OrthoDB" id="427030at2759"/>
<dbReference type="Reactome" id="R-BTA-212436">
    <property type="pathway name" value="Generic Transcription Pathway"/>
</dbReference>
<dbReference type="Proteomes" id="UP000009136">
    <property type="component" value="Chromosome 18"/>
</dbReference>
<dbReference type="Bgee" id="ENSBTAG00000009889">
    <property type="expression patterns" value="Expressed in oocyte and 107 other cell types or tissues"/>
</dbReference>
<dbReference type="GO" id="GO:0005634">
    <property type="term" value="C:nucleus"/>
    <property type="evidence" value="ECO:0000318"/>
    <property type="project" value="GO_Central"/>
</dbReference>
<dbReference type="GO" id="GO:0000981">
    <property type="term" value="F:DNA-binding transcription factor activity, RNA polymerase II-specific"/>
    <property type="evidence" value="ECO:0000318"/>
    <property type="project" value="GO_Central"/>
</dbReference>
<dbReference type="GO" id="GO:0000978">
    <property type="term" value="F:RNA polymerase II cis-regulatory region sequence-specific DNA binding"/>
    <property type="evidence" value="ECO:0000318"/>
    <property type="project" value="GO_Central"/>
</dbReference>
<dbReference type="GO" id="GO:0008270">
    <property type="term" value="F:zinc ion binding"/>
    <property type="evidence" value="ECO:0007669"/>
    <property type="project" value="UniProtKB-KW"/>
</dbReference>
<dbReference type="GO" id="GO:0006357">
    <property type="term" value="P:regulation of transcription by RNA polymerase II"/>
    <property type="evidence" value="ECO:0000318"/>
    <property type="project" value="GO_Central"/>
</dbReference>
<dbReference type="CDD" id="cd07765">
    <property type="entry name" value="KRAB_A-box"/>
    <property type="match status" value="1"/>
</dbReference>
<dbReference type="FunFam" id="3.30.160.60:FF:000996">
    <property type="entry name" value="Zinc finger protein 181"/>
    <property type="match status" value="1"/>
</dbReference>
<dbReference type="FunFam" id="3.30.160.60:FF:000144">
    <property type="entry name" value="zinc finger protein 181 isoform X1"/>
    <property type="match status" value="2"/>
</dbReference>
<dbReference type="FunFam" id="3.30.160.60:FF:000745">
    <property type="entry name" value="zinc finger protein 181 isoform X1"/>
    <property type="match status" value="1"/>
</dbReference>
<dbReference type="FunFam" id="3.30.160.60:FF:001129">
    <property type="entry name" value="zinc finger protein 181 isoform X1"/>
    <property type="match status" value="1"/>
</dbReference>
<dbReference type="FunFam" id="3.30.160.60:FF:002049">
    <property type="entry name" value="Zinc finger protein 181 isoform X2"/>
    <property type="match status" value="1"/>
</dbReference>
<dbReference type="FunFam" id="3.30.160.60:FF:000800">
    <property type="entry name" value="zinc finger protein 181 isoform X2"/>
    <property type="match status" value="1"/>
</dbReference>
<dbReference type="FunFam" id="3.30.160.60:FF:001292">
    <property type="entry name" value="zinc finger protein 181 isoform X2"/>
    <property type="match status" value="1"/>
</dbReference>
<dbReference type="FunFam" id="3.30.160.60:FF:000295">
    <property type="entry name" value="zinc finger protein 19"/>
    <property type="match status" value="1"/>
</dbReference>
<dbReference type="FunFam" id="3.30.160.60:FF:000635">
    <property type="entry name" value="zinc finger protein 250 isoform X2"/>
    <property type="match status" value="1"/>
</dbReference>
<dbReference type="FunFam" id="3.30.160.60:FF:000281">
    <property type="entry name" value="Zinc finger protein 558 isoform X1"/>
    <property type="match status" value="1"/>
</dbReference>
<dbReference type="Gene3D" id="6.10.140.140">
    <property type="match status" value="1"/>
</dbReference>
<dbReference type="Gene3D" id="3.30.160.60">
    <property type="entry name" value="Classic Zinc Finger"/>
    <property type="match status" value="11"/>
</dbReference>
<dbReference type="InterPro" id="IPR050752">
    <property type="entry name" value="C2H2-ZF_domain"/>
</dbReference>
<dbReference type="InterPro" id="IPR001909">
    <property type="entry name" value="KRAB"/>
</dbReference>
<dbReference type="InterPro" id="IPR036051">
    <property type="entry name" value="KRAB_dom_sf"/>
</dbReference>
<dbReference type="InterPro" id="IPR036236">
    <property type="entry name" value="Znf_C2H2_sf"/>
</dbReference>
<dbReference type="InterPro" id="IPR013087">
    <property type="entry name" value="Znf_C2H2_type"/>
</dbReference>
<dbReference type="PANTHER" id="PTHR24384">
    <property type="entry name" value="FINGER PUTATIVE TRANSCRIPTION FACTOR FAMILY-RELATED"/>
    <property type="match status" value="1"/>
</dbReference>
<dbReference type="PANTHER" id="PTHR24384:SF235">
    <property type="entry name" value="ZINC FINGER PROTEIN 519"/>
    <property type="match status" value="1"/>
</dbReference>
<dbReference type="Pfam" id="PF01352">
    <property type="entry name" value="KRAB"/>
    <property type="match status" value="1"/>
</dbReference>
<dbReference type="Pfam" id="PF00096">
    <property type="entry name" value="zf-C2H2"/>
    <property type="match status" value="11"/>
</dbReference>
<dbReference type="SMART" id="SM00349">
    <property type="entry name" value="KRAB"/>
    <property type="match status" value="1"/>
</dbReference>
<dbReference type="SMART" id="SM00355">
    <property type="entry name" value="ZnF_C2H2"/>
    <property type="match status" value="11"/>
</dbReference>
<dbReference type="SUPFAM" id="SSF57667">
    <property type="entry name" value="beta-beta-alpha zinc fingers"/>
    <property type="match status" value="6"/>
</dbReference>
<dbReference type="SUPFAM" id="SSF109640">
    <property type="entry name" value="KRAB domain (Kruppel-associated box)"/>
    <property type="match status" value="1"/>
</dbReference>
<dbReference type="PROSITE" id="PS50805">
    <property type="entry name" value="KRAB"/>
    <property type="match status" value="1"/>
</dbReference>
<dbReference type="PROSITE" id="PS00028">
    <property type="entry name" value="ZINC_FINGER_C2H2_1"/>
    <property type="match status" value="11"/>
</dbReference>
<dbReference type="PROSITE" id="PS50157">
    <property type="entry name" value="ZINC_FINGER_C2H2_2"/>
    <property type="match status" value="11"/>
</dbReference>
<name>ZN181_BOVIN</name>